<reference key="1">
    <citation type="journal article" date="2007" name="BMC Plant Biol.">
        <title>Complete DNA sequences of the plastid genomes of two parasitic flowering plant species, Cuscuta reflexa and Cuscuta gronovii.</title>
        <authorList>
            <person name="Funk H.T."/>
            <person name="Berg S."/>
            <person name="Krupinska K."/>
            <person name="Maier U.-G."/>
            <person name="Krause K."/>
        </authorList>
    </citation>
    <scope>NUCLEOTIDE SEQUENCE [LARGE SCALE GENOMIC DNA]</scope>
</reference>
<geneLocation type="plastid"/>
<sequence length="138" mass="14933">MAKSIPRISSRRNGRIGSGNNVRRIPKGVIHVQASFHNTIVTVTDVRGRVVSWSSAGTSGFKGTRRGTPFAAQTAATNAIRTVVDQGMLRAEVLIKGPGLGRDAALRAIRRSGILLTFVRDLTPMPHNGCRPPKQRRV</sequence>
<keyword id="KW-0934">Plastid</keyword>
<keyword id="KW-0687">Ribonucleoprotein</keyword>
<keyword id="KW-0689">Ribosomal protein</keyword>
<keyword id="KW-0694">RNA-binding</keyword>
<keyword id="KW-0699">rRNA-binding</keyword>
<accession>A7M996</accession>
<protein>
    <recommendedName>
        <fullName evidence="3">Small ribosomal subunit protein uS11c</fullName>
    </recommendedName>
    <alternativeName>
        <fullName>Plastid 30S ribosomal protein S11</fullName>
    </alternativeName>
</protein>
<comment type="subunit">
    <text evidence="1">Part of the 30S ribosomal subunit.</text>
</comment>
<comment type="subcellular location">
    <subcellularLocation>
        <location>Plastid</location>
    </subcellularLocation>
</comment>
<comment type="similarity">
    <text evidence="1">Belongs to the universal ribosomal protein uS11 family.</text>
</comment>
<comment type="caution">
    <text evidence="3">Young tissue from this organism is photosynthetic and contains some thylakoids, although the photosynthetic activity does not exceed the light compensation point.</text>
</comment>
<proteinExistence type="inferred from homology"/>
<feature type="chain" id="PRO_0000323362" description="Small ribosomal subunit protein uS11c">
    <location>
        <begin position="1"/>
        <end position="138"/>
    </location>
</feature>
<feature type="region of interest" description="Disordered" evidence="2">
    <location>
        <begin position="1"/>
        <end position="22"/>
    </location>
</feature>
<dbReference type="EMBL" id="AM711640">
    <property type="protein sequence ID" value="CAM98424.1"/>
    <property type="molecule type" value="Genomic_DNA"/>
</dbReference>
<dbReference type="RefSeq" id="YP_001430137.1">
    <property type="nucleotide sequence ID" value="NC_009766.1"/>
</dbReference>
<dbReference type="SMR" id="A7M996"/>
<dbReference type="GeneID" id="5536592"/>
<dbReference type="GO" id="GO:0009536">
    <property type="term" value="C:plastid"/>
    <property type="evidence" value="ECO:0007669"/>
    <property type="project" value="UniProtKB-SubCell"/>
</dbReference>
<dbReference type="GO" id="GO:1990904">
    <property type="term" value="C:ribonucleoprotein complex"/>
    <property type="evidence" value="ECO:0007669"/>
    <property type="project" value="UniProtKB-KW"/>
</dbReference>
<dbReference type="GO" id="GO:0005840">
    <property type="term" value="C:ribosome"/>
    <property type="evidence" value="ECO:0007669"/>
    <property type="project" value="UniProtKB-KW"/>
</dbReference>
<dbReference type="GO" id="GO:0019843">
    <property type="term" value="F:rRNA binding"/>
    <property type="evidence" value="ECO:0007669"/>
    <property type="project" value="UniProtKB-KW"/>
</dbReference>
<dbReference type="GO" id="GO:0003735">
    <property type="term" value="F:structural constituent of ribosome"/>
    <property type="evidence" value="ECO:0007669"/>
    <property type="project" value="InterPro"/>
</dbReference>
<dbReference type="GO" id="GO:0006412">
    <property type="term" value="P:translation"/>
    <property type="evidence" value="ECO:0007669"/>
    <property type="project" value="InterPro"/>
</dbReference>
<dbReference type="FunFam" id="3.30.420.80:FF:000003">
    <property type="entry name" value="30S ribosomal protein S11, chloroplastic"/>
    <property type="match status" value="1"/>
</dbReference>
<dbReference type="Gene3D" id="3.30.420.80">
    <property type="entry name" value="Ribosomal protein S11"/>
    <property type="match status" value="1"/>
</dbReference>
<dbReference type="HAMAP" id="MF_01310">
    <property type="entry name" value="Ribosomal_uS11"/>
    <property type="match status" value="1"/>
</dbReference>
<dbReference type="InterPro" id="IPR001971">
    <property type="entry name" value="Ribosomal_uS11"/>
</dbReference>
<dbReference type="InterPro" id="IPR019981">
    <property type="entry name" value="Ribosomal_uS11_bac-type"/>
</dbReference>
<dbReference type="InterPro" id="IPR018102">
    <property type="entry name" value="Ribosomal_uS11_CS"/>
</dbReference>
<dbReference type="InterPro" id="IPR036967">
    <property type="entry name" value="Ribosomal_uS11_sf"/>
</dbReference>
<dbReference type="NCBIfam" id="NF003698">
    <property type="entry name" value="PRK05309.1"/>
    <property type="match status" value="1"/>
</dbReference>
<dbReference type="NCBIfam" id="TIGR03632">
    <property type="entry name" value="uS11_bact"/>
    <property type="match status" value="1"/>
</dbReference>
<dbReference type="PANTHER" id="PTHR11759">
    <property type="entry name" value="40S RIBOSOMAL PROTEIN S14/30S RIBOSOMAL PROTEIN S11"/>
    <property type="match status" value="1"/>
</dbReference>
<dbReference type="Pfam" id="PF00411">
    <property type="entry name" value="Ribosomal_S11"/>
    <property type="match status" value="1"/>
</dbReference>
<dbReference type="PIRSF" id="PIRSF002131">
    <property type="entry name" value="Ribosomal_S11"/>
    <property type="match status" value="1"/>
</dbReference>
<dbReference type="SUPFAM" id="SSF53137">
    <property type="entry name" value="Translational machinery components"/>
    <property type="match status" value="1"/>
</dbReference>
<dbReference type="PROSITE" id="PS00054">
    <property type="entry name" value="RIBOSOMAL_S11"/>
    <property type="match status" value="1"/>
</dbReference>
<organism>
    <name type="scientific">Cuscuta reflexa</name>
    <name type="common">Southern Asian dodder</name>
    <dbReference type="NCBI Taxonomy" id="4129"/>
    <lineage>
        <taxon>Eukaryota</taxon>
        <taxon>Viridiplantae</taxon>
        <taxon>Streptophyta</taxon>
        <taxon>Embryophyta</taxon>
        <taxon>Tracheophyta</taxon>
        <taxon>Spermatophyta</taxon>
        <taxon>Magnoliopsida</taxon>
        <taxon>eudicotyledons</taxon>
        <taxon>Gunneridae</taxon>
        <taxon>Pentapetalae</taxon>
        <taxon>asterids</taxon>
        <taxon>lamiids</taxon>
        <taxon>Solanales</taxon>
        <taxon>Convolvulaceae</taxon>
        <taxon>Cuscuteae</taxon>
        <taxon>Cuscuta</taxon>
        <taxon>Cuscuta subgen. Monogynella</taxon>
    </lineage>
</organism>
<evidence type="ECO:0000255" key="1">
    <source>
        <dbReference type="HAMAP-Rule" id="MF_01310"/>
    </source>
</evidence>
<evidence type="ECO:0000256" key="2">
    <source>
        <dbReference type="SAM" id="MobiDB-lite"/>
    </source>
</evidence>
<evidence type="ECO:0000305" key="3"/>
<name>RR11_CUSRE</name>
<gene>
    <name evidence="1" type="primary">rps11</name>
</gene>